<keyword id="KW-0067">ATP-binding</keyword>
<keyword id="KW-0436">Ligase</keyword>
<keyword id="KW-0547">Nucleotide-binding</keyword>
<keyword id="KW-0648">Protein biosynthesis</keyword>
<keyword id="KW-1185">Reference proteome</keyword>
<comment type="function">
    <text evidence="1">Allows the formation of correctly charged Asn-tRNA(Asn) or Gln-tRNA(Gln) through the transamidation of misacylated Asp-tRNA(Asn) or Glu-tRNA(Gln) in organisms which lack either or both of asparaginyl-tRNA or glutaminyl-tRNA synthetases. The reaction takes place in the presence of glutamine and ATP through an activated phospho-Asp-tRNA(Asn) or phospho-Glu-tRNA(Gln).</text>
</comment>
<comment type="catalytic activity">
    <reaction evidence="1">
        <text>L-glutamyl-tRNA(Gln) + L-glutamine + ATP + H2O = L-glutaminyl-tRNA(Gln) + L-glutamate + ADP + phosphate + H(+)</text>
        <dbReference type="Rhea" id="RHEA:17521"/>
        <dbReference type="Rhea" id="RHEA-COMP:9681"/>
        <dbReference type="Rhea" id="RHEA-COMP:9684"/>
        <dbReference type="ChEBI" id="CHEBI:15377"/>
        <dbReference type="ChEBI" id="CHEBI:15378"/>
        <dbReference type="ChEBI" id="CHEBI:29985"/>
        <dbReference type="ChEBI" id="CHEBI:30616"/>
        <dbReference type="ChEBI" id="CHEBI:43474"/>
        <dbReference type="ChEBI" id="CHEBI:58359"/>
        <dbReference type="ChEBI" id="CHEBI:78520"/>
        <dbReference type="ChEBI" id="CHEBI:78521"/>
        <dbReference type="ChEBI" id="CHEBI:456216"/>
    </reaction>
</comment>
<comment type="catalytic activity">
    <reaction evidence="1">
        <text>L-aspartyl-tRNA(Asn) + L-glutamine + ATP + H2O = L-asparaginyl-tRNA(Asn) + L-glutamate + ADP + phosphate + 2 H(+)</text>
        <dbReference type="Rhea" id="RHEA:14513"/>
        <dbReference type="Rhea" id="RHEA-COMP:9674"/>
        <dbReference type="Rhea" id="RHEA-COMP:9677"/>
        <dbReference type="ChEBI" id="CHEBI:15377"/>
        <dbReference type="ChEBI" id="CHEBI:15378"/>
        <dbReference type="ChEBI" id="CHEBI:29985"/>
        <dbReference type="ChEBI" id="CHEBI:30616"/>
        <dbReference type="ChEBI" id="CHEBI:43474"/>
        <dbReference type="ChEBI" id="CHEBI:58359"/>
        <dbReference type="ChEBI" id="CHEBI:78515"/>
        <dbReference type="ChEBI" id="CHEBI:78516"/>
        <dbReference type="ChEBI" id="CHEBI:456216"/>
    </reaction>
</comment>
<comment type="subunit">
    <text evidence="1">Heterotrimer of A, B and C subunits.</text>
</comment>
<comment type="similarity">
    <text evidence="1">Belongs to the GatC family.</text>
</comment>
<feature type="chain" id="PRO_1000117634" description="Aspartyl/glutamyl-tRNA(Asn/Gln) amidotransferase subunit C">
    <location>
        <begin position="1"/>
        <end position="100"/>
    </location>
</feature>
<evidence type="ECO:0000255" key="1">
    <source>
        <dbReference type="HAMAP-Rule" id="MF_00122"/>
    </source>
</evidence>
<organism>
    <name type="scientific">Dictyoglomus turgidum (strain DSM 6724 / Z-1310)</name>
    <dbReference type="NCBI Taxonomy" id="515635"/>
    <lineage>
        <taxon>Bacteria</taxon>
        <taxon>Pseudomonadati</taxon>
        <taxon>Dictyoglomota</taxon>
        <taxon>Dictyoglomia</taxon>
        <taxon>Dictyoglomales</taxon>
        <taxon>Dictyoglomaceae</taxon>
        <taxon>Dictyoglomus</taxon>
    </lineage>
</organism>
<accession>B8E2U4</accession>
<proteinExistence type="inferred from homology"/>
<gene>
    <name evidence="1" type="primary">gatC</name>
    <name type="ordered locus">Dtur_1165</name>
</gene>
<dbReference type="EC" id="6.3.5.-" evidence="1"/>
<dbReference type="EMBL" id="CP001251">
    <property type="protein sequence ID" value="ACK42444.1"/>
    <property type="molecule type" value="Genomic_DNA"/>
</dbReference>
<dbReference type="RefSeq" id="WP_012583526.1">
    <property type="nucleotide sequence ID" value="NC_011661.1"/>
</dbReference>
<dbReference type="RefSeq" id="YP_002353058.1">
    <property type="nucleotide sequence ID" value="NC_011661.1"/>
</dbReference>
<dbReference type="SMR" id="B8E2U4"/>
<dbReference type="FunCoup" id="B8E2U4">
    <property type="interactions" value="375"/>
</dbReference>
<dbReference type="STRING" id="515635.Dtur_1165"/>
<dbReference type="EnsemblBacteria" id="ACK42444">
    <property type="protein sequence ID" value="ACK42444"/>
    <property type="gene ID" value="Dtur_1165"/>
</dbReference>
<dbReference type="KEGG" id="dtu:Dtur_1165"/>
<dbReference type="eggNOG" id="COG0721">
    <property type="taxonomic scope" value="Bacteria"/>
</dbReference>
<dbReference type="HOGENOM" id="CLU_105899_6_1_0"/>
<dbReference type="InParanoid" id="B8E2U4"/>
<dbReference type="OrthoDB" id="9813938at2"/>
<dbReference type="Proteomes" id="UP000007719">
    <property type="component" value="Chromosome"/>
</dbReference>
<dbReference type="GO" id="GO:0050566">
    <property type="term" value="F:asparaginyl-tRNA synthase (glutamine-hydrolyzing) activity"/>
    <property type="evidence" value="ECO:0007669"/>
    <property type="project" value="RHEA"/>
</dbReference>
<dbReference type="GO" id="GO:0005524">
    <property type="term" value="F:ATP binding"/>
    <property type="evidence" value="ECO:0007669"/>
    <property type="project" value="UniProtKB-KW"/>
</dbReference>
<dbReference type="GO" id="GO:0050567">
    <property type="term" value="F:glutaminyl-tRNA synthase (glutamine-hydrolyzing) activity"/>
    <property type="evidence" value="ECO:0007669"/>
    <property type="project" value="UniProtKB-UniRule"/>
</dbReference>
<dbReference type="GO" id="GO:0070681">
    <property type="term" value="P:glutaminyl-tRNAGln biosynthesis via transamidation"/>
    <property type="evidence" value="ECO:0000318"/>
    <property type="project" value="GO_Central"/>
</dbReference>
<dbReference type="GO" id="GO:0006450">
    <property type="term" value="P:regulation of translational fidelity"/>
    <property type="evidence" value="ECO:0007669"/>
    <property type="project" value="InterPro"/>
</dbReference>
<dbReference type="GO" id="GO:0006412">
    <property type="term" value="P:translation"/>
    <property type="evidence" value="ECO:0007669"/>
    <property type="project" value="UniProtKB-UniRule"/>
</dbReference>
<dbReference type="Gene3D" id="1.10.20.60">
    <property type="entry name" value="Glu-tRNAGln amidotransferase C subunit, N-terminal domain"/>
    <property type="match status" value="1"/>
</dbReference>
<dbReference type="HAMAP" id="MF_00122">
    <property type="entry name" value="GatC"/>
    <property type="match status" value="1"/>
</dbReference>
<dbReference type="InterPro" id="IPR036113">
    <property type="entry name" value="Asp/Glu-ADT_sf_sub_c"/>
</dbReference>
<dbReference type="InterPro" id="IPR003837">
    <property type="entry name" value="GatC"/>
</dbReference>
<dbReference type="NCBIfam" id="TIGR00135">
    <property type="entry name" value="gatC"/>
    <property type="match status" value="1"/>
</dbReference>
<dbReference type="PANTHER" id="PTHR15004">
    <property type="entry name" value="GLUTAMYL-TRNA(GLN) AMIDOTRANSFERASE SUBUNIT C, MITOCHONDRIAL"/>
    <property type="match status" value="1"/>
</dbReference>
<dbReference type="PANTHER" id="PTHR15004:SF0">
    <property type="entry name" value="GLUTAMYL-TRNA(GLN) AMIDOTRANSFERASE SUBUNIT C, MITOCHONDRIAL"/>
    <property type="match status" value="1"/>
</dbReference>
<dbReference type="Pfam" id="PF02686">
    <property type="entry name" value="GatC"/>
    <property type="match status" value="1"/>
</dbReference>
<dbReference type="SUPFAM" id="SSF141000">
    <property type="entry name" value="Glu-tRNAGln amidotransferase C subunit"/>
    <property type="match status" value="1"/>
</dbReference>
<name>GATC_DICTD</name>
<reference key="1">
    <citation type="journal article" date="2016" name="Front. Microbiol.">
        <title>The complete genome sequence of hyperthermophile Dictyoglomus turgidum DSM 6724 reveals a specialized carbohydrate fermentor.</title>
        <authorList>
            <person name="Brumm P.J."/>
            <person name="Gowda K."/>
            <person name="Robb F.T."/>
            <person name="Mead D.A."/>
        </authorList>
    </citation>
    <scope>NUCLEOTIDE SEQUENCE [LARGE SCALE GENOMIC DNA]</scope>
    <source>
        <strain>DSM 6724 / Z-1310</strain>
    </source>
</reference>
<protein>
    <recommendedName>
        <fullName evidence="1">Aspartyl/glutamyl-tRNA(Asn/Gln) amidotransferase subunit C</fullName>
        <shortName evidence="1">Asp/Glu-ADT subunit C</shortName>
        <ecNumber evidence="1">6.3.5.-</ecNumber>
    </recommendedName>
</protein>
<sequence>MEKRDFKEQLKKTAHLARLYLTPEEEELYAKQLQDILDYFKKLQEVDTSNIEPMAHVLSLSNIWREDEPKGSISQEEAFKNAPEIENLGFKIPRIIKREE</sequence>